<feature type="signal peptide" evidence="2">
    <location>
        <begin position="1"/>
        <end position="22"/>
    </location>
</feature>
<feature type="chain" id="PRO_0000365532" description="Germin-like protein 12-2">
    <location>
        <begin position="23"/>
        <end position="229"/>
    </location>
</feature>
<feature type="domain" description="Cupin type-1" evidence="2">
    <location>
        <begin position="62"/>
        <end position="217"/>
    </location>
</feature>
<feature type="binding site" evidence="1">
    <location>
        <position position="111"/>
    </location>
    <ligand>
        <name>Mn(2+)</name>
        <dbReference type="ChEBI" id="CHEBI:29035"/>
    </ligand>
</feature>
<feature type="binding site" evidence="1">
    <location>
        <position position="113"/>
    </location>
    <ligand>
        <name>Mn(2+)</name>
        <dbReference type="ChEBI" id="CHEBI:29035"/>
    </ligand>
</feature>
<feature type="binding site" evidence="1">
    <location>
        <position position="118"/>
    </location>
    <ligand>
        <name>Mn(2+)</name>
        <dbReference type="ChEBI" id="CHEBI:29035"/>
    </ligand>
</feature>
<feature type="binding site" evidence="1">
    <location>
        <position position="162"/>
    </location>
    <ligand>
        <name>Mn(2+)</name>
        <dbReference type="ChEBI" id="CHEBI:29035"/>
    </ligand>
</feature>
<feature type="glycosylation site" description="N-linked (GlcNAc...) asparagine" evidence="2">
    <location>
        <position position="78"/>
    </location>
</feature>
<feature type="disulfide bond" evidence="1">
    <location>
        <begin position="32"/>
        <end position="47"/>
    </location>
</feature>
<accession>Q2QXJ2</accession>
<accession>A0A0P0Y7H2</accession>
<sequence length="229" mass="24684">MASSNFFLLTALIALVATQAMASDPSPLQDFCVADRNSPVHVNGFPCKDAKDVNVDDFFLAANLDKPMDTTKSKAGSNVTLINVMKLAGLNTLGISMARIDYAPKGQNPPHTHPRATEILTVLEGTLYVGFVTSNQANGENKLFTKTLNKGDVFVFPQGLIHFQFNPSYDKPAVAIAALSSQNPGAITIANAVFGSNSPISDDVLAKAFQVDKKAVDWLQAQFWENNHN</sequence>
<evidence type="ECO:0000250" key="1"/>
<evidence type="ECO:0000255" key="2"/>
<evidence type="ECO:0000305" key="3"/>
<comment type="function">
    <text>May play a role in plant defense. Probably has no oxalate oxidase activity even if the active site is conserved.</text>
</comment>
<comment type="subunit">
    <text evidence="1">Oligomer (believed to be a pentamer but probably hexamer).</text>
</comment>
<comment type="subcellular location">
    <subcellularLocation>
        <location evidence="1">Secreted</location>
        <location evidence="1">Extracellular space</location>
        <location evidence="1">Apoplast</location>
    </subcellularLocation>
</comment>
<comment type="similarity">
    <text evidence="3">Belongs to the germin family.</text>
</comment>
<gene>
    <name type="ordered locus">Os12g0154800</name>
    <name type="ordered locus">LOC_Os12g05860</name>
    <name type="ORF">OsJ_033898</name>
</gene>
<organism>
    <name type="scientific">Oryza sativa subsp. japonica</name>
    <name type="common">Rice</name>
    <dbReference type="NCBI Taxonomy" id="39947"/>
    <lineage>
        <taxon>Eukaryota</taxon>
        <taxon>Viridiplantae</taxon>
        <taxon>Streptophyta</taxon>
        <taxon>Embryophyta</taxon>
        <taxon>Tracheophyta</taxon>
        <taxon>Spermatophyta</taxon>
        <taxon>Magnoliopsida</taxon>
        <taxon>Liliopsida</taxon>
        <taxon>Poales</taxon>
        <taxon>Poaceae</taxon>
        <taxon>BOP clade</taxon>
        <taxon>Oryzoideae</taxon>
        <taxon>Oryzeae</taxon>
        <taxon>Oryzinae</taxon>
        <taxon>Oryza</taxon>
        <taxon>Oryza sativa</taxon>
    </lineage>
</organism>
<reference key="1">
    <citation type="journal article" date="2005" name="BMC Biol.">
        <title>The sequence of rice chromosomes 11 and 12, rich in disease resistance genes and recent gene duplications.</title>
        <authorList>
            <consortium name="The rice chromosomes 11 and 12 sequencing consortia"/>
        </authorList>
    </citation>
    <scope>NUCLEOTIDE SEQUENCE [LARGE SCALE GENOMIC DNA]</scope>
    <source>
        <strain>cv. Nipponbare</strain>
    </source>
</reference>
<reference key="2">
    <citation type="journal article" date="2005" name="Nature">
        <title>The map-based sequence of the rice genome.</title>
        <authorList>
            <consortium name="International rice genome sequencing project (IRGSP)"/>
        </authorList>
    </citation>
    <scope>NUCLEOTIDE SEQUENCE [LARGE SCALE GENOMIC DNA]</scope>
    <source>
        <strain>cv. Nipponbare</strain>
    </source>
</reference>
<reference key="3">
    <citation type="journal article" date="2008" name="Nucleic Acids Res.">
        <title>The rice annotation project database (RAP-DB): 2008 update.</title>
        <authorList>
            <consortium name="The rice annotation project (RAP)"/>
        </authorList>
    </citation>
    <scope>GENOME REANNOTATION</scope>
    <source>
        <strain>cv. Nipponbare</strain>
    </source>
</reference>
<reference key="4">
    <citation type="journal article" date="2013" name="Rice">
        <title>Improvement of the Oryza sativa Nipponbare reference genome using next generation sequence and optical map data.</title>
        <authorList>
            <person name="Kawahara Y."/>
            <person name="de la Bastide M."/>
            <person name="Hamilton J.P."/>
            <person name="Kanamori H."/>
            <person name="McCombie W.R."/>
            <person name="Ouyang S."/>
            <person name="Schwartz D.C."/>
            <person name="Tanaka T."/>
            <person name="Wu J."/>
            <person name="Zhou S."/>
            <person name="Childs K.L."/>
            <person name="Davidson R.M."/>
            <person name="Lin H."/>
            <person name="Quesada-Ocampo L."/>
            <person name="Vaillancourt B."/>
            <person name="Sakai H."/>
            <person name="Lee S.S."/>
            <person name="Kim J."/>
            <person name="Numa H."/>
            <person name="Itoh T."/>
            <person name="Buell C.R."/>
            <person name="Matsumoto T."/>
        </authorList>
    </citation>
    <scope>GENOME REANNOTATION</scope>
    <source>
        <strain>cv. Nipponbare</strain>
    </source>
</reference>
<reference key="5">
    <citation type="journal article" date="2005" name="PLoS Biol.">
        <title>The genomes of Oryza sativa: a history of duplications.</title>
        <authorList>
            <person name="Yu J."/>
            <person name="Wang J."/>
            <person name="Lin W."/>
            <person name="Li S."/>
            <person name="Li H."/>
            <person name="Zhou J."/>
            <person name="Ni P."/>
            <person name="Dong W."/>
            <person name="Hu S."/>
            <person name="Zeng C."/>
            <person name="Zhang J."/>
            <person name="Zhang Y."/>
            <person name="Li R."/>
            <person name="Xu Z."/>
            <person name="Li S."/>
            <person name="Li X."/>
            <person name="Zheng H."/>
            <person name="Cong L."/>
            <person name="Lin L."/>
            <person name="Yin J."/>
            <person name="Geng J."/>
            <person name="Li G."/>
            <person name="Shi J."/>
            <person name="Liu J."/>
            <person name="Lv H."/>
            <person name="Li J."/>
            <person name="Wang J."/>
            <person name="Deng Y."/>
            <person name="Ran L."/>
            <person name="Shi X."/>
            <person name="Wang X."/>
            <person name="Wu Q."/>
            <person name="Li C."/>
            <person name="Ren X."/>
            <person name="Wang J."/>
            <person name="Wang X."/>
            <person name="Li D."/>
            <person name="Liu D."/>
            <person name="Zhang X."/>
            <person name="Ji Z."/>
            <person name="Zhao W."/>
            <person name="Sun Y."/>
            <person name="Zhang Z."/>
            <person name="Bao J."/>
            <person name="Han Y."/>
            <person name="Dong L."/>
            <person name="Ji J."/>
            <person name="Chen P."/>
            <person name="Wu S."/>
            <person name="Liu J."/>
            <person name="Xiao Y."/>
            <person name="Bu D."/>
            <person name="Tan J."/>
            <person name="Yang L."/>
            <person name="Ye C."/>
            <person name="Zhang J."/>
            <person name="Xu J."/>
            <person name="Zhou Y."/>
            <person name="Yu Y."/>
            <person name="Zhang B."/>
            <person name="Zhuang S."/>
            <person name="Wei H."/>
            <person name="Liu B."/>
            <person name="Lei M."/>
            <person name="Yu H."/>
            <person name="Li Y."/>
            <person name="Xu H."/>
            <person name="Wei S."/>
            <person name="He X."/>
            <person name="Fang L."/>
            <person name="Zhang Z."/>
            <person name="Zhang Y."/>
            <person name="Huang X."/>
            <person name="Su Z."/>
            <person name="Tong W."/>
            <person name="Li J."/>
            <person name="Tong Z."/>
            <person name="Li S."/>
            <person name="Ye J."/>
            <person name="Wang L."/>
            <person name="Fang L."/>
            <person name="Lei T."/>
            <person name="Chen C.-S."/>
            <person name="Chen H.-C."/>
            <person name="Xu Z."/>
            <person name="Li H."/>
            <person name="Huang H."/>
            <person name="Zhang F."/>
            <person name="Xu H."/>
            <person name="Li N."/>
            <person name="Zhao C."/>
            <person name="Li S."/>
            <person name="Dong L."/>
            <person name="Huang Y."/>
            <person name="Li L."/>
            <person name="Xi Y."/>
            <person name="Qi Q."/>
            <person name="Li W."/>
            <person name="Zhang B."/>
            <person name="Hu W."/>
            <person name="Zhang Y."/>
            <person name="Tian X."/>
            <person name="Jiao Y."/>
            <person name="Liang X."/>
            <person name="Jin J."/>
            <person name="Gao L."/>
            <person name="Zheng W."/>
            <person name="Hao B."/>
            <person name="Liu S.-M."/>
            <person name="Wang W."/>
            <person name="Yuan L."/>
            <person name="Cao M."/>
            <person name="McDermott J."/>
            <person name="Samudrala R."/>
            <person name="Wang J."/>
            <person name="Wong G.K.-S."/>
            <person name="Yang H."/>
        </authorList>
    </citation>
    <scope>NUCLEOTIDE SEQUENCE [LARGE SCALE GENOMIC DNA]</scope>
    <source>
        <strain>cv. Nipponbare</strain>
    </source>
</reference>
<dbReference type="EMBL" id="DP000011">
    <property type="protein sequence ID" value="ABA95856.1"/>
    <property type="molecule type" value="Genomic_DNA"/>
</dbReference>
<dbReference type="EMBL" id="AP008218">
    <property type="protein sequence ID" value="BAF29208.1"/>
    <property type="molecule type" value="Genomic_DNA"/>
</dbReference>
<dbReference type="EMBL" id="AP014968">
    <property type="protein sequence ID" value="BAT15942.1"/>
    <property type="molecule type" value="Genomic_DNA"/>
</dbReference>
<dbReference type="EMBL" id="CM000149">
    <property type="protein sequence ID" value="EAZ19689.1"/>
    <property type="molecule type" value="Genomic_DNA"/>
</dbReference>
<dbReference type="SMR" id="Q2QXJ2"/>
<dbReference type="FunCoup" id="Q2QXJ2">
    <property type="interactions" value="40"/>
</dbReference>
<dbReference type="STRING" id="39947.Q2QXJ2"/>
<dbReference type="PaxDb" id="39947-Q2QXJ2"/>
<dbReference type="EnsemblPlants" id="Os12t0154800-01">
    <property type="protein sequence ID" value="Os12t0154800-01"/>
    <property type="gene ID" value="Os12g0154800"/>
</dbReference>
<dbReference type="Gramene" id="Os12t0154800-01">
    <property type="protein sequence ID" value="Os12t0154800-01"/>
    <property type="gene ID" value="Os12g0154800"/>
</dbReference>
<dbReference type="KEGG" id="dosa:Os12g0154800"/>
<dbReference type="KEGG" id="osa:112935992"/>
<dbReference type="eggNOG" id="ENOG502QQ4A">
    <property type="taxonomic scope" value="Eukaryota"/>
</dbReference>
<dbReference type="HOGENOM" id="CLU_015790_0_0_1"/>
<dbReference type="InParanoid" id="Q2QXJ2"/>
<dbReference type="OMA" id="VSWHALA"/>
<dbReference type="OrthoDB" id="1921208at2759"/>
<dbReference type="Proteomes" id="UP000000763">
    <property type="component" value="Chromosome 12"/>
</dbReference>
<dbReference type="Proteomes" id="UP000007752">
    <property type="component" value="Chromosome 12"/>
</dbReference>
<dbReference type="Proteomes" id="UP000059680">
    <property type="component" value="Chromosome 12"/>
</dbReference>
<dbReference type="GO" id="GO:0048046">
    <property type="term" value="C:apoplast"/>
    <property type="evidence" value="ECO:0007669"/>
    <property type="project" value="UniProtKB-SubCell"/>
</dbReference>
<dbReference type="GO" id="GO:0030145">
    <property type="term" value="F:manganese ion binding"/>
    <property type="evidence" value="ECO:0007669"/>
    <property type="project" value="InterPro"/>
</dbReference>
<dbReference type="CDD" id="cd02241">
    <property type="entry name" value="cupin_OxOx"/>
    <property type="match status" value="1"/>
</dbReference>
<dbReference type="FunFam" id="2.60.120.10:FF:000005">
    <property type="entry name" value="Germin-like protein subfamily 1 member 8"/>
    <property type="match status" value="1"/>
</dbReference>
<dbReference type="Gene3D" id="2.60.120.10">
    <property type="entry name" value="Jelly Rolls"/>
    <property type="match status" value="1"/>
</dbReference>
<dbReference type="InterPro" id="IPR006045">
    <property type="entry name" value="Cupin_1"/>
</dbReference>
<dbReference type="InterPro" id="IPR001929">
    <property type="entry name" value="Germin"/>
</dbReference>
<dbReference type="InterPro" id="IPR019780">
    <property type="entry name" value="Germin_Mn-BS"/>
</dbReference>
<dbReference type="InterPro" id="IPR014710">
    <property type="entry name" value="RmlC-like_jellyroll"/>
</dbReference>
<dbReference type="InterPro" id="IPR011051">
    <property type="entry name" value="RmlC_Cupin_sf"/>
</dbReference>
<dbReference type="PANTHER" id="PTHR31238">
    <property type="entry name" value="GERMIN-LIKE PROTEIN SUBFAMILY 3 MEMBER 3"/>
    <property type="match status" value="1"/>
</dbReference>
<dbReference type="Pfam" id="PF00190">
    <property type="entry name" value="Cupin_1"/>
    <property type="match status" value="1"/>
</dbReference>
<dbReference type="PRINTS" id="PR00325">
    <property type="entry name" value="GERMIN"/>
</dbReference>
<dbReference type="SMART" id="SM00835">
    <property type="entry name" value="Cupin_1"/>
    <property type="match status" value="1"/>
</dbReference>
<dbReference type="SUPFAM" id="SSF51182">
    <property type="entry name" value="RmlC-like cupins"/>
    <property type="match status" value="1"/>
</dbReference>
<dbReference type="PROSITE" id="PS00725">
    <property type="entry name" value="GERMIN"/>
    <property type="match status" value="1"/>
</dbReference>
<proteinExistence type="evidence at transcript level"/>
<protein>
    <recommendedName>
        <fullName>Germin-like protein 12-2</fullName>
    </recommendedName>
</protein>
<keyword id="KW-0052">Apoplast</keyword>
<keyword id="KW-1015">Disulfide bond</keyword>
<keyword id="KW-0325">Glycoprotein</keyword>
<keyword id="KW-0464">Manganese</keyword>
<keyword id="KW-0479">Metal-binding</keyword>
<keyword id="KW-1185">Reference proteome</keyword>
<keyword id="KW-0964">Secreted</keyword>
<keyword id="KW-0732">Signal</keyword>
<name>GL122_ORYSJ</name>